<protein>
    <recommendedName>
        <fullName evidence="1">Large ribosomal subunit protein bL21</fullName>
    </recommendedName>
    <alternativeName>
        <fullName evidence="3">50S ribosomal protein L21</fullName>
    </alternativeName>
</protein>
<proteinExistence type="inferred from homology"/>
<comment type="function">
    <text evidence="1">This protein binds to 23S rRNA in the presence of protein L20.</text>
</comment>
<comment type="subunit">
    <text evidence="1">Part of the 50S ribosomal subunit. Contacts protein L20.</text>
</comment>
<comment type="similarity">
    <text evidence="1">Belongs to the bacterial ribosomal protein bL21 family.</text>
</comment>
<name>RL21_PARMW</name>
<keyword id="KW-0687">Ribonucleoprotein</keyword>
<keyword id="KW-0689">Ribosomal protein</keyword>
<keyword id="KW-0694">RNA-binding</keyword>
<keyword id="KW-0699">rRNA-binding</keyword>
<evidence type="ECO:0000255" key="1">
    <source>
        <dbReference type="HAMAP-Rule" id="MF_01363"/>
    </source>
</evidence>
<evidence type="ECO:0000256" key="2">
    <source>
        <dbReference type="SAM" id="MobiDB-lite"/>
    </source>
</evidence>
<evidence type="ECO:0000305" key="3"/>
<accession>Q7U8R6</accession>
<dbReference type="EMBL" id="BX569690">
    <property type="protein sequence ID" value="CAE07062.1"/>
    <property type="molecule type" value="Genomic_DNA"/>
</dbReference>
<dbReference type="RefSeq" id="WP_011127416.1">
    <property type="nucleotide sequence ID" value="NC_005070.1"/>
</dbReference>
<dbReference type="SMR" id="Q7U8R6"/>
<dbReference type="STRING" id="84588.SYNW0547"/>
<dbReference type="KEGG" id="syw:SYNW0547"/>
<dbReference type="eggNOG" id="COG0261">
    <property type="taxonomic scope" value="Bacteria"/>
</dbReference>
<dbReference type="HOGENOM" id="CLU_061463_6_0_3"/>
<dbReference type="Proteomes" id="UP000001422">
    <property type="component" value="Chromosome"/>
</dbReference>
<dbReference type="GO" id="GO:0005737">
    <property type="term" value="C:cytoplasm"/>
    <property type="evidence" value="ECO:0007669"/>
    <property type="project" value="UniProtKB-ARBA"/>
</dbReference>
<dbReference type="GO" id="GO:1990904">
    <property type="term" value="C:ribonucleoprotein complex"/>
    <property type="evidence" value="ECO:0007669"/>
    <property type="project" value="UniProtKB-KW"/>
</dbReference>
<dbReference type="GO" id="GO:0005840">
    <property type="term" value="C:ribosome"/>
    <property type="evidence" value="ECO:0007669"/>
    <property type="project" value="UniProtKB-KW"/>
</dbReference>
<dbReference type="GO" id="GO:0019843">
    <property type="term" value="F:rRNA binding"/>
    <property type="evidence" value="ECO:0007669"/>
    <property type="project" value="UniProtKB-UniRule"/>
</dbReference>
<dbReference type="GO" id="GO:0003735">
    <property type="term" value="F:structural constituent of ribosome"/>
    <property type="evidence" value="ECO:0007669"/>
    <property type="project" value="InterPro"/>
</dbReference>
<dbReference type="GO" id="GO:0006412">
    <property type="term" value="P:translation"/>
    <property type="evidence" value="ECO:0007669"/>
    <property type="project" value="UniProtKB-UniRule"/>
</dbReference>
<dbReference type="HAMAP" id="MF_01363">
    <property type="entry name" value="Ribosomal_bL21"/>
    <property type="match status" value="1"/>
</dbReference>
<dbReference type="InterPro" id="IPR028909">
    <property type="entry name" value="bL21-like"/>
</dbReference>
<dbReference type="InterPro" id="IPR036164">
    <property type="entry name" value="bL21-like_sf"/>
</dbReference>
<dbReference type="InterPro" id="IPR001787">
    <property type="entry name" value="Ribosomal_bL21"/>
</dbReference>
<dbReference type="InterPro" id="IPR018258">
    <property type="entry name" value="Ribosomal_bL21_CS"/>
</dbReference>
<dbReference type="NCBIfam" id="TIGR00061">
    <property type="entry name" value="L21"/>
    <property type="match status" value="1"/>
</dbReference>
<dbReference type="PANTHER" id="PTHR21349">
    <property type="entry name" value="50S RIBOSOMAL PROTEIN L21"/>
    <property type="match status" value="1"/>
</dbReference>
<dbReference type="PANTHER" id="PTHR21349:SF0">
    <property type="entry name" value="LARGE RIBOSOMAL SUBUNIT PROTEIN BL21M"/>
    <property type="match status" value="1"/>
</dbReference>
<dbReference type="Pfam" id="PF00829">
    <property type="entry name" value="Ribosomal_L21p"/>
    <property type="match status" value="1"/>
</dbReference>
<dbReference type="SUPFAM" id="SSF141091">
    <property type="entry name" value="L21p-like"/>
    <property type="match status" value="1"/>
</dbReference>
<dbReference type="PROSITE" id="PS01169">
    <property type="entry name" value="RIBOSOMAL_L21"/>
    <property type="match status" value="1"/>
</dbReference>
<sequence>MADTKTATPATDAEEATATPPAAAPSSEAYAIVEASGTQMWVQANRYYDVDRLHAEVDETIKLENVLMVKDSKGTTLGQPFVKDATVALKVMAHRRGPKVIVYKMRPKKKTRRKNGHRQELTRVMVESITVGGKAIS</sequence>
<gene>
    <name evidence="1" type="primary">rplU</name>
    <name evidence="1" type="synonym">rpl21</name>
    <name type="ordered locus">SYNW0547</name>
</gene>
<reference key="1">
    <citation type="journal article" date="2003" name="Nature">
        <title>The genome of a motile marine Synechococcus.</title>
        <authorList>
            <person name="Palenik B."/>
            <person name="Brahamsha B."/>
            <person name="Larimer F.W."/>
            <person name="Land M.L."/>
            <person name="Hauser L."/>
            <person name="Chain P."/>
            <person name="Lamerdin J.E."/>
            <person name="Regala W."/>
            <person name="Allen E.E."/>
            <person name="McCarren J."/>
            <person name="Paulsen I.T."/>
            <person name="Dufresne A."/>
            <person name="Partensky F."/>
            <person name="Webb E.A."/>
            <person name="Waterbury J."/>
        </authorList>
    </citation>
    <scope>NUCLEOTIDE SEQUENCE [LARGE SCALE GENOMIC DNA]</scope>
    <source>
        <strain>WH8102</strain>
    </source>
</reference>
<feature type="chain" id="PRO_0000269412" description="Large ribosomal subunit protein bL21">
    <location>
        <begin position="1"/>
        <end position="137"/>
    </location>
</feature>
<feature type="region of interest" description="Disordered" evidence="2">
    <location>
        <begin position="1"/>
        <end position="26"/>
    </location>
</feature>
<organism>
    <name type="scientific">Parasynechococcus marenigrum (strain WH8102)</name>
    <dbReference type="NCBI Taxonomy" id="84588"/>
    <lineage>
        <taxon>Bacteria</taxon>
        <taxon>Bacillati</taxon>
        <taxon>Cyanobacteriota</taxon>
        <taxon>Cyanophyceae</taxon>
        <taxon>Synechococcales</taxon>
        <taxon>Prochlorococcaceae</taxon>
        <taxon>Parasynechococcus</taxon>
        <taxon>Parasynechococcus marenigrum</taxon>
    </lineage>
</organism>